<gene>
    <name type="primary">SMN1</name>
    <name type="synonym">SMN</name>
</gene>
<evidence type="ECO:0000250" key="1"/>
<evidence type="ECO:0000250" key="2">
    <source>
        <dbReference type="UniProtKB" id="P97801"/>
    </source>
</evidence>
<evidence type="ECO:0000250" key="3">
    <source>
        <dbReference type="UniProtKB" id="Q16637"/>
    </source>
</evidence>
<evidence type="ECO:0000255" key="4">
    <source>
        <dbReference type="PROSITE-ProRule" id="PRU00211"/>
    </source>
</evidence>
<evidence type="ECO:0000256" key="5">
    <source>
        <dbReference type="SAM" id="MobiDB-lite"/>
    </source>
</evidence>
<evidence type="ECO:0000305" key="6"/>
<reference key="1">
    <citation type="submission" date="2004-11" db="EMBL/GenBank/DDBJ databases">
        <authorList>
            <consortium name="The German cDNA consortium"/>
        </authorList>
    </citation>
    <scope>NUCLEOTIDE SEQUENCE [LARGE SCALE MRNA]</scope>
    <source>
        <tissue>Kidney</tissue>
    </source>
</reference>
<comment type="function">
    <text evidence="3">The SMN complex catalyzes the assembly of small nuclear ribonucleoproteins (snRNPs), the building blocks of the spliceosome, and thereby plays an important role in the splicing of cellular pre-mRNAs. Most spliceosomal snRNPs contain a common set of Sm proteins SNRPB, SNRPD1, SNRPD2, SNRPD3, SNRPE, SNRPF and SNRPG that assemble in a heptameric protein ring on the Sm site of the small nuclear RNA to form the core snRNP (Sm core). In the cytosol, the Sm proteins SNRPD1, SNRPD2, SNRPE, SNRPF and SNRPG are trapped in an inactive 6S pICln-Sm complex by the chaperone CLNS1A that controls the assembly of the core snRNP. To assemble core snRNPs, the SMN complex accepts the trapped 5Sm proteins from CLNS1A forming an intermediate. Binding of snRNA inside 5Sm ultimately triggers eviction of the SMN complex, thereby allowing binding of SNRPD3 and SNRPB to complete assembly of the core snRNP. Within the SMN complex, SMN1 acts as a structural backbone and together with GEMIN2 it gathers the Sm complex subunits. Ensures the correct splicing of U12 intron-containing genes that may be important for normal motor and proprioceptive neurons development. Also required for resolving RNA-DNA hybrids created by RNA polymerase II, that form R-loop in transcription terminal regions, an important step in proper transcription termination. May also play a role in the metabolism of small nucleolar ribonucleoprotein (snoRNPs).</text>
</comment>
<comment type="subunit">
    <text evidence="3">Homooligomer; may form higher order homooligomers in the dimer to octamer range. Part of the core SMN complex that contains SMN1, GEMIN2/SIP1, DDX20/GEMIN3, GEMIN4, GEMIN5, GEMIN6, GEMIN7, GEMIN8 and STRAP/UNRIP. Part of the SMN-Sm complex that contains SMN1, GEMIN2/SIP1, DDX20/GEMIN3, GEMIN4, GEMIN5, GEMIN6, GEMIN7, GEMIN8, STRAP/UNRIP and the Sm proteins SNRPB, SNRPD1, SNRPD2, SNRPD3, SNRPE, SNRPF and SNRPG. Component of an import snRNP complex composed of KPNB1, RNUT1, SMN1 and ZNF259. Interacts with DDX20, FBL, NOLA1, RNUT1, SYNCRIP and with several spliceosomal snRNP core Sm proteins, including SNRPB, SNRPD1, SNRPD2, SNRPD3, SNRPE and ILF3. Interacts with GEMIN2; the interaction is direct. Interacts with GEMIN3; the interaction is direct. Interacts with GEMIN8; the interaction is direct. Interacts with SNRPB; the interaction is direct. Interacts (via Tudor domain) with SNRPD1 (via C-terminus); the interaction is direct. Interacts with SNRPD2; the interaction is direct. Interacts (via Tudor domain) with SNRPD3 (via C-terminus); the interaction is direct. Interacts with SNRPE; the interaction is direct. Interacts with OSTF1, LSM10, LSM11 and RPP20/POP7. Interacts (via C-terminal region) with ZPR1 (via C-terminal region). Interacts (via Tudor domain) with COIL. Interacts with SETX; recruits SETX to POLR2A. Interacts with POLR2A (via the C-terminal domain (CTD)). Interacts with PRMT5. Interacts with XRN2. Interacts (via C-terminus) with FMR1 (via C-terminus); the interaction is direct and occurs in a RNA-independent manner. Interacts (via Tudor domain) with SF3B2 ('Arg-508'-methylated form). Interacts with WRAP53/TCAB1. Interacts (via Tudor domain) with ELAVL4 in an RNA-independent manner; the interaction is required for localization of ELAVL4 to RNA granules. Interacts with FRG1.</text>
</comment>
<comment type="subcellular location">
    <subcellularLocation>
        <location evidence="3">Nucleus</location>
        <location evidence="3">Gem</location>
    </subcellularLocation>
    <subcellularLocation>
        <location evidence="3">Nucleus</location>
        <location evidence="3">Cajal body</location>
    </subcellularLocation>
    <subcellularLocation>
        <location evidence="3">Cytoplasm</location>
    </subcellularLocation>
    <subcellularLocation>
        <location evidence="3">Cytoplasmic granule</location>
    </subcellularLocation>
    <subcellularLocation>
        <location evidence="3">Perikaryon</location>
    </subcellularLocation>
    <subcellularLocation>
        <location evidence="3">Cell projection</location>
        <location evidence="3">Neuron projection</location>
    </subcellularLocation>
    <subcellularLocation>
        <location evidence="2">Cell projection</location>
        <location evidence="2">Axon</location>
    </subcellularLocation>
    <subcellularLocation>
        <location evidence="2">Cytoplasm</location>
        <location evidence="2">Myofibril</location>
        <location evidence="2">Sarcomere</location>
        <location evidence="2">Z line</location>
    </subcellularLocation>
    <text evidence="2 3">Colocalizes with actin and at the Z-line of skeletal muscle (By similarity). Under stress conditions colocalizes with RPP20/POP7 in punctuated cytoplasmic granules. Colocalized and redistributed with ZPR1 from the cytoplasm to nuclear gems (Gemini of coiled bodies) and Cajal bodies. Colocalizes with FMR1 in cytoplasmic granules in the soma and neurite cell processes (By similarity).</text>
</comment>
<comment type="domain">
    <text evidence="3">The Tudor domain mediates association with dimethylarginines, which are common in snRNP proteins.</text>
</comment>
<comment type="similarity">
    <text evidence="6">Belongs to the SMN family.</text>
</comment>
<sequence>MAMSSGGSGSGVPEQEDAVLFRRGTGQSDDSDIWDDTALIKAYDKAVASFKHALKNGDICETSGKSKTTPKRKPAKKNKSQKKNTAASLQQWKVGDKCSAIWSEDGCIYPATIASIDFKRETCVVVYTGYGNREEQNLSDLLSPICEVANNIEQNAQENENESQVSTDESENSRSPGNKSDNIKPKSAPWNSFLPPPPPMPGPRLGPGKPGLKFNGPPPPPPPPPPHLLSCWLPPFPSGPPIIPPPPPICPDSLDDADALGSMLISWYMSGYHTGYYMGFRQNQKEGRCSHSLN</sequence>
<dbReference type="EMBL" id="CR857721">
    <property type="protein sequence ID" value="CAH89989.1"/>
    <property type="molecule type" value="mRNA"/>
</dbReference>
<dbReference type="RefSeq" id="NP_001124942.1">
    <property type="nucleotide sequence ID" value="NM_001131470.2"/>
</dbReference>
<dbReference type="BMRB" id="Q5RE18"/>
<dbReference type="SMR" id="Q5RE18"/>
<dbReference type="FunCoup" id="Q5RE18">
    <property type="interactions" value="862"/>
</dbReference>
<dbReference type="STRING" id="9601.ENSPPYP00000017360"/>
<dbReference type="Ensembl" id="ENSPPYT00000018065.3">
    <property type="protein sequence ID" value="ENSPPYP00000017360.3"/>
    <property type="gene ID" value="ENSPPYG00000015533.3"/>
</dbReference>
<dbReference type="GeneID" id="100171813"/>
<dbReference type="KEGG" id="pon:100171813"/>
<dbReference type="CTD" id="6606"/>
<dbReference type="eggNOG" id="KOG4327">
    <property type="taxonomic scope" value="Eukaryota"/>
</dbReference>
<dbReference type="GeneTree" id="ENSGT00940000153352"/>
<dbReference type="InParanoid" id="Q5RE18"/>
<dbReference type="OrthoDB" id="197400at2759"/>
<dbReference type="Proteomes" id="UP000001595">
    <property type="component" value="Chromosome 5"/>
</dbReference>
<dbReference type="GO" id="GO:0015030">
    <property type="term" value="C:Cajal body"/>
    <property type="evidence" value="ECO:0000250"/>
    <property type="project" value="UniProtKB"/>
</dbReference>
<dbReference type="GO" id="GO:0030137">
    <property type="term" value="C:COPI-coated vesicle"/>
    <property type="evidence" value="ECO:0007669"/>
    <property type="project" value="Ensembl"/>
</dbReference>
<dbReference type="GO" id="GO:0005737">
    <property type="term" value="C:cytoplasm"/>
    <property type="evidence" value="ECO:0000250"/>
    <property type="project" value="UniProtKB"/>
</dbReference>
<dbReference type="GO" id="GO:0036464">
    <property type="term" value="C:cytoplasmic ribonucleoprotein granule"/>
    <property type="evidence" value="ECO:0000250"/>
    <property type="project" value="UniProtKB"/>
</dbReference>
<dbReference type="GO" id="GO:0005829">
    <property type="term" value="C:cytosol"/>
    <property type="evidence" value="ECO:0000250"/>
    <property type="project" value="UniProtKB"/>
</dbReference>
<dbReference type="GO" id="GO:0097504">
    <property type="term" value="C:Gemini of Cajal bodies"/>
    <property type="evidence" value="ECO:0000250"/>
    <property type="project" value="UniProtKB"/>
</dbReference>
<dbReference type="GO" id="GO:0005794">
    <property type="term" value="C:Golgi apparatus"/>
    <property type="evidence" value="ECO:0007669"/>
    <property type="project" value="Ensembl"/>
</dbReference>
<dbReference type="GO" id="GO:0030426">
    <property type="term" value="C:growth cone"/>
    <property type="evidence" value="ECO:0007669"/>
    <property type="project" value="Ensembl"/>
</dbReference>
<dbReference type="GO" id="GO:0043005">
    <property type="term" value="C:neuron projection"/>
    <property type="evidence" value="ECO:0000250"/>
    <property type="project" value="UniProtKB"/>
</dbReference>
<dbReference type="GO" id="GO:0005654">
    <property type="term" value="C:nucleoplasm"/>
    <property type="evidence" value="ECO:0000250"/>
    <property type="project" value="UniProtKB"/>
</dbReference>
<dbReference type="GO" id="GO:0005634">
    <property type="term" value="C:nucleus"/>
    <property type="evidence" value="ECO:0000250"/>
    <property type="project" value="UniProtKB"/>
</dbReference>
<dbReference type="GO" id="GO:0043204">
    <property type="term" value="C:perikaryon"/>
    <property type="evidence" value="ECO:0000250"/>
    <property type="project" value="UniProtKB"/>
</dbReference>
<dbReference type="GO" id="GO:0032797">
    <property type="term" value="C:SMN complex"/>
    <property type="evidence" value="ECO:0000250"/>
    <property type="project" value="UniProtKB"/>
</dbReference>
<dbReference type="GO" id="GO:0034719">
    <property type="term" value="C:SMN-Sm protein complex"/>
    <property type="evidence" value="ECO:0000250"/>
    <property type="project" value="UniProtKB"/>
</dbReference>
<dbReference type="GO" id="GO:0030018">
    <property type="term" value="C:Z disc"/>
    <property type="evidence" value="ECO:0007669"/>
    <property type="project" value="UniProtKB-SubCell"/>
</dbReference>
<dbReference type="GO" id="GO:0003723">
    <property type="term" value="F:RNA binding"/>
    <property type="evidence" value="ECO:0007669"/>
    <property type="project" value="UniProtKB-KW"/>
</dbReference>
<dbReference type="GO" id="GO:0007409">
    <property type="term" value="P:axonogenesis"/>
    <property type="evidence" value="ECO:0007669"/>
    <property type="project" value="Ensembl"/>
</dbReference>
<dbReference type="GO" id="GO:0006353">
    <property type="term" value="P:DNA-templated transcription termination"/>
    <property type="evidence" value="ECO:0000250"/>
    <property type="project" value="UniProtKB"/>
</dbReference>
<dbReference type="GO" id="GO:0007019">
    <property type="term" value="P:microtubule depolymerization"/>
    <property type="evidence" value="ECO:0007669"/>
    <property type="project" value="Ensembl"/>
</dbReference>
<dbReference type="GO" id="GO:0033120">
    <property type="term" value="P:positive regulation of RNA splicing"/>
    <property type="evidence" value="ECO:0007669"/>
    <property type="project" value="Ensembl"/>
</dbReference>
<dbReference type="GO" id="GO:0010975">
    <property type="term" value="P:regulation of neuron projection development"/>
    <property type="evidence" value="ECO:0007669"/>
    <property type="project" value="Ensembl"/>
</dbReference>
<dbReference type="GO" id="GO:0000387">
    <property type="term" value="P:spliceosomal snRNP assembly"/>
    <property type="evidence" value="ECO:0000250"/>
    <property type="project" value="UniProtKB"/>
</dbReference>
<dbReference type="CDD" id="cd22852">
    <property type="entry name" value="SMN_C"/>
    <property type="match status" value="1"/>
</dbReference>
<dbReference type="CDD" id="cd22851">
    <property type="entry name" value="SMN_N"/>
    <property type="match status" value="1"/>
</dbReference>
<dbReference type="CDD" id="cd20398">
    <property type="entry name" value="Tudor_SMN"/>
    <property type="match status" value="1"/>
</dbReference>
<dbReference type="FunFam" id="3.40.190.10:FF:000110">
    <property type="entry name" value="Survival motor neuron protein 1"/>
    <property type="match status" value="1"/>
</dbReference>
<dbReference type="FunFam" id="2.30.30.140:FF:000038">
    <property type="entry name" value="Survival of motor neuron-related-splicing factor 30"/>
    <property type="match status" value="1"/>
</dbReference>
<dbReference type="Gene3D" id="2.30.30.140">
    <property type="match status" value="1"/>
</dbReference>
<dbReference type="Gene3D" id="3.40.190.10">
    <property type="entry name" value="Periplasmic binding protein-like II"/>
    <property type="match status" value="1"/>
</dbReference>
<dbReference type="InterPro" id="IPR040424">
    <property type="entry name" value="Smn1"/>
</dbReference>
<dbReference type="InterPro" id="IPR047313">
    <property type="entry name" value="SMN_C"/>
</dbReference>
<dbReference type="InterPro" id="IPR049481">
    <property type="entry name" value="SMN_G2-BD"/>
</dbReference>
<dbReference type="InterPro" id="IPR010304">
    <property type="entry name" value="SMN_Tudor"/>
</dbReference>
<dbReference type="InterPro" id="IPR002999">
    <property type="entry name" value="Tudor"/>
</dbReference>
<dbReference type="InterPro" id="IPR047298">
    <property type="entry name" value="Tudor_SMN_eumet"/>
</dbReference>
<dbReference type="PANTHER" id="PTHR39267:SF1">
    <property type="entry name" value="SURVIVAL MOTOR NEURON PROTEIN"/>
    <property type="match status" value="1"/>
</dbReference>
<dbReference type="PANTHER" id="PTHR39267">
    <property type="entry name" value="SURVIVAL MOTOR NEURON-LIKE PROTEIN 1"/>
    <property type="match status" value="1"/>
</dbReference>
<dbReference type="Pfam" id="PF20636">
    <property type="entry name" value="SMN_G2-BD"/>
    <property type="match status" value="1"/>
</dbReference>
<dbReference type="Pfam" id="PF06003">
    <property type="entry name" value="SMN_Tudor"/>
    <property type="match status" value="1"/>
</dbReference>
<dbReference type="Pfam" id="PF20635">
    <property type="entry name" value="SMN_YG-box"/>
    <property type="match status" value="1"/>
</dbReference>
<dbReference type="SMART" id="SM00333">
    <property type="entry name" value="TUDOR"/>
    <property type="match status" value="1"/>
</dbReference>
<dbReference type="SUPFAM" id="SSF63748">
    <property type="entry name" value="Tudor/PWWP/MBT"/>
    <property type="match status" value="1"/>
</dbReference>
<dbReference type="PROSITE" id="PS50304">
    <property type="entry name" value="TUDOR"/>
    <property type="match status" value="1"/>
</dbReference>
<organism>
    <name type="scientific">Pongo abelii</name>
    <name type="common">Sumatran orangutan</name>
    <name type="synonym">Pongo pygmaeus abelii</name>
    <dbReference type="NCBI Taxonomy" id="9601"/>
    <lineage>
        <taxon>Eukaryota</taxon>
        <taxon>Metazoa</taxon>
        <taxon>Chordata</taxon>
        <taxon>Craniata</taxon>
        <taxon>Vertebrata</taxon>
        <taxon>Euteleostomi</taxon>
        <taxon>Mammalia</taxon>
        <taxon>Eutheria</taxon>
        <taxon>Euarchontoglires</taxon>
        <taxon>Primates</taxon>
        <taxon>Haplorrhini</taxon>
        <taxon>Catarrhini</taxon>
        <taxon>Hominidae</taxon>
        <taxon>Pongo</taxon>
    </lineage>
</organism>
<proteinExistence type="evidence at transcript level"/>
<keyword id="KW-0007">Acetylation</keyword>
<keyword id="KW-0966">Cell projection</keyword>
<keyword id="KW-0963">Cytoplasm</keyword>
<keyword id="KW-1017">Isopeptide bond</keyword>
<keyword id="KW-0507">mRNA processing</keyword>
<keyword id="KW-0508">mRNA splicing</keyword>
<keyword id="KW-0524">Neurogenesis</keyword>
<keyword id="KW-0539">Nucleus</keyword>
<keyword id="KW-0597">Phosphoprotein</keyword>
<keyword id="KW-1185">Reference proteome</keyword>
<keyword id="KW-0694">RNA-binding</keyword>
<keyword id="KW-0832">Ubl conjugation</keyword>
<protein>
    <recommendedName>
        <fullName>Survival motor neuron protein</fullName>
    </recommendedName>
</protein>
<feature type="initiator methionine" description="Removed" evidence="3">
    <location>
        <position position="1"/>
    </location>
</feature>
<feature type="chain" id="PRO_0000333770" description="Survival motor neuron protein">
    <location>
        <begin position="2"/>
        <end position="294"/>
    </location>
</feature>
<feature type="domain" description="Tudor" evidence="4">
    <location>
        <begin position="91"/>
        <end position="151"/>
    </location>
</feature>
<feature type="region of interest" description="Disordered" evidence="5">
    <location>
        <begin position="1"/>
        <end position="32"/>
    </location>
</feature>
<feature type="region of interest" description="P1 (binding site for GEMIN2)" evidence="1">
    <location>
        <begin position="13"/>
        <end position="44"/>
    </location>
</feature>
<feature type="region of interest" description="Disordered" evidence="5">
    <location>
        <begin position="60"/>
        <end position="88"/>
    </location>
</feature>
<feature type="region of interest" description="Required for interaction with RPP20/POP7" evidence="1">
    <location>
        <begin position="97"/>
        <end position="209"/>
    </location>
</feature>
<feature type="region of interest" description="Disordered" evidence="5">
    <location>
        <begin position="156"/>
        <end position="222"/>
    </location>
</feature>
<feature type="region of interest" description="P2 (binding site for SM B)" evidence="1">
    <location>
        <begin position="240"/>
        <end position="267"/>
    </location>
</feature>
<feature type="region of interest" description="Required for interaction with SYNCRIP" evidence="1">
    <location>
        <begin position="279"/>
        <end position="294"/>
    </location>
</feature>
<feature type="compositionally biased region" description="Gly residues" evidence="5">
    <location>
        <begin position="1"/>
        <end position="10"/>
    </location>
</feature>
<feature type="compositionally biased region" description="Basic residues" evidence="5">
    <location>
        <begin position="68"/>
        <end position="82"/>
    </location>
</feature>
<feature type="compositionally biased region" description="Low complexity" evidence="5">
    <location>
        <begin position="156"/>
        <end position="166"/>
    </location>
</feature>
<feature type="compositionally biased region" description="Pro residues" evidence="5">
    <location>
        <begin position="194"/>
        <end position="204"/>
    </location>
</feature>
<feature type="compositionally biased region" description="Low complexity" evidence="5">
    <location>
        <begin position="206"/>
        <end position="215"/>
    </location>
</feature>
<feature type="modified residue" description="N-acetylalanine" evidence="3">
    <location>
        <position position="2"/>
    </location>
</feature>
<feature type="modified residue" description="Phosphoserine; by PKA" evidence="3">
    <location>
        <position position="4"/>
    </location>
</feature>
<feature type="modified residue" description="Phosphoserine; by PKA" evidence="3">
    <location>
        <position position="5"/>
    </location>
</feature>
<feature type="modified residue" description="Phosphoserine; by PKA" evidence="3">
    <location>
        <position position="8"/>
    </location>
</feature>
<feature type="modified residue" description="Phosphothreonine" evidence="3">
    <location>
        <position position="25"/>
    </location>
</feature>
<feature type="modified residue" description="Phosphoserine" evidence="3">
    <location>
        <position position="28"/>
    </location>
</feature>
<feature type="modified residue" description="Phosphoserine" evidence="3">
    <location>
        <position position="31"/>
    </location>
</feature>
<feature type="modified residue" description="Phosphothreonine" evidence="3">
    <location>
        <position position="69"/>
    </location>
</feature>
<feature type="modified residue" description="Phosphothreonine; by PKA" evidence="3">
    <location>
        <position position="85"/>
    </location>
</feature>
<feature type="modified residue" description="Phosphoserine; by PKA" evidence="3">
    <location>
        <position position="187"/>
    </location>
</feature>
<feature type="cross-link" description="Glycyl lysine isopeptide (Lys-Gly) (interchain with G-Cter in SUMO2)" evidence="3">
    <location>
        <position position="51"/>
    </location>
</feature>
<feature type="cross-link" description="Glycyl lysine isopeptide (Lys-Gly) (interchain with G-Cter in SUMO2)" evidence="3">
    <location>
        <position position="209"/>
    </location>
</feature>
<name>SMN_PONAB</name>
<accession>Q5RE18</accession>